<gene>
    <name evidence="1" type="primary">psbI</name>
</gene>
<reference key="1">
    <citation type="journal article" date="2007" name="Mol. Biol. Evol.">
        <title>Chloroplast genome (cpDNA) of Cycas taitungensis and 56 cp protein-coding genes of Gnetum parvifolium: insights into cpDNA evolution and phylogeny of extant seed plants.</title>
        <authorList>
            <person name="Wu C.-S."/>
            <person name="Wang Y.-N."/>
            <person name="Liu S.-M."/>
            <person name="Chaw S.-M."/>
        </authorList>
    </citation>
    <scope>NUCLEOTIDE SEQUENCE [LARGE SCALE GENOMIC DNA]</scope>
</reference>
<organism>
    <name type="scientific">Cycas taitungensis</name>
    <name type="common">Prince sago</name>
    <name type="synonym">Cycas taiwaniana</name>
    <dbReference type="NCBI Taxonomy" id="54799"/>
    <lineage>
        <taxon>Eukaryota</taxon>
        <taxon>Viridiplantae</taxon>
        <taxon>Streptophyta</taxon>
        <taxon>Embryophyta</taxon>
        <taxon>Tracheophyta</taxon>
        <taxon>Spermatophyta</taxon>
        <taxon>Cycadidae</taxon>
        <taxon>Cycadales</taxon>
        <taxon>Cycadaceae</taxon>
        <taxon>Cycas</taxon>
    </lineage>
</organism>
<sequence>MFTLKLFVYTVVIFFVSLFIFGFLSNDPGRNPGRKE</sequence>
<comment type="function">
    <text evidence="1">One of the components of the core complex of photosystem II (PSII), required for its stability and/or assembly. PSII is a light-driven water:plastoquinone oxidoreductase that uses light energy to abstract electrons from H(2)O, generating O(2) and a proton gradient subsequently used for ATP formation. It consists of a core antenna complex that captures photons, and an electron transfer chain that converts photonic excitation into a charge separation.</text>
</comment>
<comment type="subunit">
    <text evidence="1">PSII is composed of 1 copy each of membrane proteins PsbA, PsbB, PsbC, PsbD, PsbE, PsbF, PsbH, PsbI, PsbJ, PsbK, PsbL, PsbM, PsbT, PsbX, PsbY, PsbZ, Psb30/Ycf12, at least 3 peripheral proteins of the oxygen-evolving complex and a large number of cofactors. It forms dimeric complexes.</text>
</comment>
<comment type="subcellular location">
    <subcellularLocation>
        <location evidence="1">Plastid</location>
        <location evidence="1">Chloroplast thylakoid membrane</location>
        <topology evidence="1">Single-pass membrane protein</topology>
    </subcellularLocation>
</comment>
<comment type="similarity">
    <text evidence="1">Belongs to the PsbI family.</text>
</comment>
<keyword id="KW-0150">Chloroplast</keyword>
<keyword id="KW-0472">Membrane</keyword>
<keyword id="KW-0602">Photosynthesis</keyword>
<keyword id="KW-0604">Photosystem II</keyword>
<keyword id="KW-0934">Plastid</keyword>
<keyword id="KW-0674">Reaction center</keyword>
<keyword id="KW-0793">Thylakoid</keyword>
<keyword id="KW-0812">Transmembrane</keyword>
<keyword id="KW-1133">Transmembrane helix</keyword>
<name>PSBI_CYCTA</name>
<protein>
    <recommendedName>
        <fullName evidence="1">Photosystem II reaction center protein I</fullName>
        <shortName evidence="1">PSII-I</shortName>
    </recommendedName>
    <alternativeName>
        <fullName evidence="1">PSII 4.8 kDa protein</fullName>
    </alternativeName>
</protein>
<proteinExistence type="inferred from homology"/>
<evidence type="ECO:0000255" key="1">
    <source>
        <dbReference type="HAMAP-Rule" id="MF_01316"/>
    </source>
</evidence>
<geneLocation type="chloroplast"/>
<feature type="chain" id="PRO_0000353228" description="Photosystem II reaction center protein I">
    <location>
        <begin position="1"/>
        <end position="36"/>
    </location>
</feature>
<feature type="transmembrane region" description="Helical" evidence="1">
    <location>
        <begin position="4"/>
        <end position="24"/>
    </location>
</feature>
<dbReference type="EMBL" id="AP009339">
    <property type="protein sequence ID" value="BAF64915.1"/>
    <property type="molecule type" value="Genomic_DNA"/>
</dbReference>
<dbReference type="RefSeq" id="YP_001312174.1">
    <property type="nucleotide sequence ID" value="NC_009618.1"/>
</dbReference>
<dbReference type="SMR" id="A6H5E9"/>
<dbReference type="GeneID" id="5309589"/>
<dbReference type="GO" id="GO:0009535">
    <property type="term" value="C:chloroplast thylakoid membrane"/>
    <property type="evidence" value="ECO:0007669"/>
    <property type="project" value="UniProtKB-SubCell"/>
</dbReference>
<dbReference type="GO" id="GO:0009539">
    <property type="term" value="C:photosystem II reaction center"/>
    <property type="evidence" value="ECO:0007669"/>
    <property type="project" value="InterPro"/>
</dbReference>
<dbReference type="GO" id="GO:0015979">
    <property type="term" value="P:photosynthesis"/>
    <property type="evidence" value="ECO:0007669"/>
    <property type="project" value="UniProtKB-UniRule"/>
</dbReference>
<dbReference type="HAMAP" id="MF_01316">
    <property type="entry name" value="PSII_PsbI"/>
    <property type="match status" value="1"/>
</dbReference>
<dbReference type="InterPro" id="IPR003686">
    <property type="entry name" value="PSII_PsbI"/>
</dbReference>
<dbReference type="InterPro" id="IPR037271">
    <property type="entry name" value="PSII_PsbI_sf"/>
</dbReference>
<dbReference type="NCBIfam" id="NF002735">
    <property type="entry name" value="PRK02655.1"/>
    <property type="match status" value="1"/>
</dbReference>
<dbReference type="PANTHER" id="PTHR35772">
    <property type="entry name" value="PHOTOSYSTEM II REACTION CENTER PROTEIN I"/>
    <property type="match status" value="1"/>
</dbReference>
<dbReference type="PANTHER" id="PTHR35772:SF1">
    <property type="entry name" value="PHOTOSYSTEM II REACTION CENTER PROTEIN I"/>
    <property type="match status" value="1"/>
</dbReference>
<dbReference type="Pfam" id="PF02532">
    <property type="entry name" value="PsbI"/>
    <property type="match status" value="1"/>
</dbReference>
<dbReference type="SUPFAM" id="SSF161041">
    <property type="entry name" value="Photosystem II reaction center protein I, PsbI"/>
    <property type="match status" value="1"/>
</dbReference>
<accession>A6H5E9</accession>